<proteinExistence type="inferred from homology"/>
<accession>Q0ZQK7</accession>
<keyword id="KW-0007">Acetylation</keyword>
<keyword id="KW-0053">Apoptosis</keyword>
<keyword id="KW-0963">Cytoplasm</keyword>
<keyword id="KW-0325">Glycoprotein</keyword>
<keyword id="KW-0413">Isomerase</keyword>
<keyword id="KW-1017">Isopeptide bond</keyword>
<keyword id="KW-0539">Nucleus</keyword>
<keyword id="KW-0597">Phosphoprotein</keyword>
<keyword id="KW-1185">Reference proteome</keyword>
<keyword id="KW-0697">Rotamase</keyword>
<keyword id="KW-0964">Secreted</keyword>
<keyword id="KW-0832">Ubl conjugation</keyword>
<protein>
    <recommendedName>
        <fullName>Peptidyl-prolyl cis-trans isomerase A</fullName>
        <shortName>PPIase A</shortName>
        <ecNumber evidence="2">5.2.1.8</ecNumber>
    </recommendedName>
    <alternativeName>
        <fullName>Cyclophilin A</fullName>
    </alternativeName>
    <alternativeName>
        <fullName>Cyclosporin A-binding protein</fullName>
    </alternativeName>
    <alternativeName>
        <fullName>Rotamase A</fullName>
    </alternativeName>
    <component>
        <recommendedName>
            <fullName>Peptidyl-prolyl cis-trans isomerase A, N-terminally processed</fullName>
        </recommendedName>
    </component>
</protein>
<comment type="function">
    <text evidence="1 2">Catalyzes the cis-trans isomerization of proline imidic peptide bonds in oligopeptides (By similarity). Exerts a strong chemotactic effect on leukocytes partly through activation of one of its membrane receptors BSG/CD147, initiating a signaling cascade that culminates in MAPK/ERK activation (By similarity). Activates endothelial cells (ECs) in a proinflammatory manner by stimulating activation of NF-kappa-B and ERK, JNK and p38 MAP-kinases and by inducing expression of adhesion molecules including SELE and VCAM1 (By similarity). Induces apoptosis in ECs by promoting the FOXO1-dependent expression of CCL2 and BCL2L11 which are involved in EC chemotaxis and apoptosis (By similarity). In response to oxidative stress, initiates proapoptotic and antiapoptotic signaling in ECs via activation of NF-kappa-B and AKT1 and up-regulation of antiapoptotic protein BCL2 (By similarity). Negatively regulates MAP3K5/ASK1 kinase activity, autophosphorylation and oxidative stress-induced apoptosis mediated by MAP3K5/ASK1 (By similarity). Necessary for the assembly of TARDBP in heterogeneous nuclear ribonucleoprotein (hnRNP) complexes and regulates TARDBP binding to RNA UG repeats and TARDBP-dependent expression of HDAC6, ATG7 and VCP which are involved in clearance of protein aggregates (By similarity). Plays an important role in platelet activation and aggregation (By similarity). Regulates calcium mobilization and integrin ITGA2B:ITGB3 bidirectional signaling via increased ROS production as well as by facilitating the interaction between integrin and the cell cytoskeleton (By similarity). Binds heparan sulfate glycosaminoglycans (By similarity).</text>
</comment>
<comment type="catalytic activity">
    <reaction evidence="2">
        <text>[protein]-peptidylproline (omega=180) = [protein]-peptidylproline (omega=0)</text>
        <dbReference type="Rhea" id="RHEA:16237"/>
        <dbReference type="Rhea" id="RHEA-COMP:10747"/>
        <dbReference type="Rhea" id="RHEA-COMP:10748"/>
        <dbReference type="ChEBI" id="CHEBI:83833"/>
        <dbReference type="ChEBI" id="CHEBI:83834"/>
        <dbReference type="EC" id="5.2.1.8"/>
    </reaction>
</comment>
<comment type="activity regulation">
    <text evidence="2">Binds cyclosporin A (CsA). CsA mediates some of its effects via an inhibitory action on PPIase.</text>
</comment>
<comment type="subunit">
    <text evidence="1 2">Interacts with protein phosphatase PPP3CA/calcineurin A (By similarity). Interacts with isoform 2 of BSG/CD147 (By similarity). Interacts with FOXO1; the interaction promotes FOXO1 dephosphorylation, nuclear accumulation and transcriptional activity (By similarity). Interacts with integrin ITGA2B:ITGB3; the interaction is ROS and peptidyl-prolyl cis-trans isomerase (PPIase) activity-dependent and is increased in the presence of thrombin (By similarity). Interacts with MAP3K5 (By similarity). Interacts with TARDBP; the interaction is dependent on the RNA-binding activity of TARDBP and the PPIase activity of PPIA/CYPA and the acetylation of PPIA/CYPA at Lys-125 favors the interaction (By similarity). Interacts with HNRNPA1, HNRNPA2B1, HNRNPC, RBMX, HNRNPK and HNRNPM (By similarity).</text>
</comment>
<comment type="subcellular location">
    <subcellularLocation>
        <location evidence="2">Cytoplasm</location>
    </subcellularLocation>
    <subcellularLocation>
        <location evidence="2">Secreted</location>
    </subcellularLocation>
    <subcellularLocation>
        <location evidence="2">Nucleus</location>
    </subcellularLocation>
    <text evidence="2">Secretion occurs in response to oxidative stress in vascular smooth muscle through a vesicular secretory pathway that involves actin remodeling and myosin II activation, and mediates ERK1/2 activation.</text>
</comment>
<comment type="PTM">
    <text evidence="2">Acetylation at Lys-125 markedly inhibits catalysis of cis to trans isomerization (By similarity). PPIA acetylation also antagonizes the immunosuppressive effects of cyclosporine by inhibiting the sequential steps of cyclosporine binding and calcineurin inhibition (By similarity). Acetylation at Lys-125 favors the interaction with TARDBP (By similarity).</text>
</comment>
<comment type="similarity">
    <text evidence="5">Belongs to the cyclophilin-type PPIase family. PPIase A subfamily.</text>
</comment>
<organism>
    <name type="scientific">Nomascus leucogenys</name>
    <name type="common">Northern white-cheeked gibbon</name>
    <name type="synonym">Hylobates leucogenys</name>
    <dbReference type="NCBI Taxonomy" id="61853"/>
    <lineage>
        <taxon>Eukaryota</taxon>
        <taxon>Metazoa</taxon>
        <taxon>Chordata</taxon>
        <taxon>Craniata</taxon>
        <taxon>Vertebrata</taxon>
        <taxon>Euteleostomi</taxon>
        <taxon>Mammalia</taxon>
        <taxon>Eutheria</taxon>
        <taxon>Euarchontoglires</taxon>
        <taxon>Primates</taxon>
        <taxon>Haplorrhini</taxon>
        <taxon>Catarrhini</taxon>
        <taxon>Hylobatidae</taxon>
        <taxon>Nomascus</taxon>
    </lineage>
</organism>
<evidence type="ECO:0000250" key="1">
    <source>
        <dbReference type="UniProtKB" id="P17742"/>
    </source>
</evidence>
<evidence type="ECO:0000250" key="2">
    <source>
        <dbReference type="UniProtKB" id="P62937"/>
    </source>
</evidence>
<evidence type="ECO:0000255" key="3"/>
<evidence type="ECO:0000255" key="4">
    <source>
        <dbReference type="PROSITE-ProRule" id="PRU00156"/>
    </source>
</evidence>
<evidence type="ECO:0000305" key="5"/>
<reference key="1">
    <citation type="journal article" date="2006" name="Retrovirology">
        <title>Patterns of evolution of host proteins involved in retroviral pathogenesis.</title>
        <authorList>
            <person name="Ortiz M."/>
            <person name="Bleiber G."/>
            <person name="Martinez R."/>
            <person name="Kaessmann H."/>
            <person name="Telenti A."/>
        </authorList>
    </citation>
    <scope>NUCLEOTIDE SEQUENCE [GENOMIC DNA]</scope>
</reference>
<sequence length="165" mass="18012">MVNPTVFFDIAVDGEPLGRVSFELFADKVPKTAENFRALSTGEKGFGYKGSCFHRIIPGFMCQGGDFTRHNGTGGKSIYGEKFEDENFILKHTGPGILSMANAGPNTNGSQFFICTAKTEWLDGKHVVFGKVKEGMNIVEAMERFGSRNGKTSKKITIADCGQLE</sequence>
<gene>
    <name type="primary">PPIA</name>
</gene>
<name>PPIA_NOMLE</name>
<feature type="chain" id="PRO_0000423242" description="Peptidyl-prolyl cis-trans isomerase A">
    <location>
        <begin position="1"/>
        <end position="165"/>
    </location>
</feature>
<feature type="initiator methionine" description="Removed; alternate" evidence="2">
    <location>
        <position position="1"/>
    </location>
</feature>
<feature type="chain" id="PRO_0000260461" description="Peptidyl-prolyl cis-trans isomerase A, N-terminally processed">
    <location>
        <begin position="2"/>
        <end position="165"/>
    </location>
</feature>
<feature type="domain" description="PPIase cyclophilin-type" evidence="4">
    <location>
        <begin position="7"/>
        <end position="163"/>
    </location>
</feature>
<feature type="modified residue" description="N-acetylmethionine" evidence="2">
    <location>
        <position position="1"/>
    </location>
</feature>
<feature type="modified residue" description="N-acetylvaline; in Peptidyl-prolyl cis-trans isomerase A, N-terminally processed" evidence="2">
    <location>
        <position position="2"/>
    </location>
</feature>
<feature type="modified residue" description="N6-acetyllysine; alternate" evidence="2">
    <location>
        <position position="28"/>
    </location>
</feature>
<feature type="modified residue" description="N6-acetyllysine" evidence="2">
    <location>
        <position position="44"/>
    </location>
</feature>
<feature type="modified residue" description="N6-acetyllysine" evidence="2">
    <location>
        <position position="76"/>
    </location>
</feature>
<feature type="modified residue" description="Phosphoserine" evidence="2">
    <location>
        <position position="77"/>
    </location>
</feature>
<feature type="modified residue" description="N6-acetyllysine; alternate" evidence="2">
    <location>
        <position position="82"/>
    </location>
</feature>
<feature type="modified residue" description="Phosphothreonine" evidence="2">
    <location>
        <position position="93"/>
    </location>
</feature>
<feature type="modified residue" description="N6-acetyllysine" evidence="2">
    <location>
        <position position="125"/>
    </location>
</feature>
<feature type="modified residue" description="N6-acetyllysine" evidence="2">
    <location>
        <position position="131"/>
    </location>
</feature>
<feature type="modified residue" description="N6-acetyllysine" evidence="1">
    <location>
        <position position="133"/>
    </location>
</feature>
<feature type="glycosylation site" description="N-linked (GlcNAc...) asparagine" evidence="3">
    <location>
        <position position="108"/>
    </location>
</feature>
<feature type="cross-link" description="Glycyl lysine isopeptide (Lys-Gly) (interchain with G-Cter in SUMO2); alternate" evidence="2">
    <location>
        <position position="28"/>
    </location>
</feature>
<feature type="cross-link" description="Glycyl lysine isopeptide (Lys-Gly) (interchain with G-Cter in ubiquitin); alternate" evidence="2">
    <location>
        <position position="28"/>
    </location>
</feature>
<feature type="cross-link" description="Glycyl lysine isopeptide (Lys-Gly) (interchain with G-Cter in SUMO2); alternate" evidence="2">
    <location>
        <position position="82"/>
    </location>
</feature>
<dbReference type="EC" id="5.2.1.8" evidence="2"/>
<dbReference type="EMBL" id="DQ251280">
    <property type="protein sequence ID" value="ABB77880.1"/>
    <property type="molecule type" value="Genomic_DNA"/>
</dbReference>
<dbReference type="RefSeq" id="XP_003268926.1">
    <property type="nucleotide sequence ID" value="XM_003268878.4"/>
</dbReference>
<dbReference type="RefSeq" id="XP_003268937.1">
    <property type="nucleotide sequence ID" value="XM_003268889.3"/>
</dbReference>
<dbReference type="SMR" id="Q0ZQK7"/>
<dbReference type="FunCoup" id="Q0ZQK7">
    <property type="interactions" value="1494"/>
</dbReference>
<dbReference type="STRING" id="61853.ENSNLEP00000004877"/>
<dbReference type="GlyCosmos" id="Q0ZQK7">
    <property type="glycosylation" value="1 site, No reported glycans"/>
</dbReference>
<dbReference type="Ensembl" id="ENSNLET00000005128.2">
    <property type="protein sequence ID" value="ENSNLEP00000004877.2"/>
    <property type="gene ID" value="ENSNLEG00000004024.3"/>
</dbReference>
<dbReference type="GeneID" id="100594480"/>
<dbReference type="KEGG" id="nle:100594480"/>
<dbReference type="CTD" id="5478"/>
<dbReference type="eggNOG" id="KOG0865">
    <property type="taxonomic scope" value="Eukaryota"/>
</dbReference>
<dbReference type="GeneTree" id="ENSGT00950000183087"/>
<dbReference type="InParanoid" id="Q0ZQK7"/>
<dbReference type="OMA" id="CVSIYGH"/>
<dbReference type="OrthoDB" id="9753748at2759"/>
<dbReference type="TreeFam" id="TF316719"/>
<dbReference type="Proteomes" id="UP000001073">
    <property type="component" value="Chromosome 17"/>
</dbReference>
<dbReference type="GO" id="GO:0005737">
    <property type="term" value="C:cytoplasm"/>
    <property type="evidence" value="ECO:0000250"/>
    <property type="project" value="UniProtKB"/>
</dbReference>
<dbReference type="GO" id="GO:0005829">
    <property type="term" value="C:cytosol"/>
    <property type="evidence" value="ECO:0000250"/>
    <property type="project" value="UniProtKB"/>
</dbReference>
<dbReference type="GO" id="GO:0005576">
    <property type="term" value="C:extracellular region"/>
    <property type="evidence" value="ECO:0000250"/>
    <property type="project" value="UniProtKB"/>
</dbReference>
<dbReference type="GO" id="GO:0005634">
    <property type="term" value="C:nucleus"/>
    <property type="evidence" value="ECO:0000250"/>
    <property type="project" value="UniProtKB"/>
</dbReference>
<dbReference type="GO" id="GO:0016018">
    <property type="term" value="F:cyclosporin A binding"/>
    <property type="evidence" value="ECO:0007669"/>
    <property type="project" value="TreeGrafter"/>
</dbReference>
<dbReference type="GO" id="GO:1904399">
    <property type="term" value="F:heparan sulfate binding"/>
    <property type="evidence" value="ECO:0000250"/>
    <property type="project" value="UniProtKB"/>
</dbReference>
<dbReference type="GO" id="GO:0005178">
    <property type="term" value="F:integrin binding"/>
    <property type="evidence" value="ECO:0000250"/>
    <property type="project" value="UniProtKB"/>
</dbReference>
<dbReference type="GO" id="GO:0003755">
    <property type="term" value="F:peptidyl-prolyl cis-trans isomerase activity"/>
    <property type="evidence" value="ECO:0000250"/>
    <property type="project" value="UniProtKB"/>
</dbReference>
<dbReference type="GO" id="GO:0032148">
    <property type="term" value="P:activation of protein kinase B activity"/>
    <property type="evidence" value="ECO:0000250"/>
    <property type="project" value="UniProtKB"/>
</dbReference>
<dbReference type="GO" id="GO:0006915">
    <property type="term" value="P:apoptotic process"/>
    <property type="evidence" value="ECO:0000250"/>
    <property type="project" value="UniProtKB"/>
</dbReference>
<dbReference type="GO" id="GO:0060352">
    <property type="term" value="P:cell adhesion molecule production"/>
    <property type="evidence" value="ECO:0000250"/>
    <property type="project" value="UniProtKB"/>
</dbReference>
<dbReference type="GO" id="GO:0034599">
    <property type="term" value="P:cellular response to oxidative stress"/>
    <property type="evidence" value="ECO:0000250"/>
    <property type="project" value="UniProtKB"/>
</dbReference>
<dbReference type="GO" id="GO:0042118">
    <property type="term" value="P:endothelial cell activation"/>
    <property type="evidence" value="ECO:0000250"/>
    <property type="project" value="UniProtKB"/>
</dbReference>
<dbReference type="GO" id="GO:0030595">
    <property type="term" value="P:leukocyte chemotaxis"/>
    <property type="evidence" value="ECO:0000250"/>
    <property type="project" value="UniProtKB"/>
</dbReference>
<dbReference type="GO" id="GO:1902176">
    <property type="term" value="P:negative regulation of oxidative stress-induced intrinsic apoptotic signaling pathway"/>
    <property type="evidence" value="ECO:0000250"/>
    <property type="project" value="UniProtKB"/>
</dbReference>
<dbReference type="GO" id="GO:0061944">
    <property type="term" value="P:negative regulation of protein K48-linked ubiquitination"/>
    <property type="evidence" value="ECO:0000250"/>
    <property type="project" value="UniProtKB"/>
</dbReference>
<dbReference type="GO" id="GO:0006469">
    <property type="term" value="P:negative regulation of protein kinase activity"/>
    <property type="evidence" value="ECO:0000250"/>
    <property type="project" value="UniProtKB"/>
</dbReference>
<dbReference type="GO" id="GO:0001933">
    <property type="term" value="P:negative regulation of protein phosphorylation"/>
    <property type="evidence" value="ECO:0000250"/>
    <property type="project" value="UniProtKB"/>
</dbReference>
<dbReference type="GO" id="GO:0032873">
    <property type="term" value="P:negative regulation of stress-activated MAPK cascade"/>
    <property type="evidence" value="ECO:0000250"/>
    <property type="project" value="UniProtKB"/>
</dbReference>
<dbReference type="GO" id="GO:0030593">
    <property type="term" value="P:neutrophil chemotaxis"/>
    <property type="evidence" value="ECO:0000250"/>
    <property type="project" value="UniProtKB"/>
</dbReference>
<dbReference type="GO" id="GO:0030168">
    <property type="term" value="P:platelet activation"/>
    <property type="evidence" value="ECO:0000250"/>
    <property type="project" value="UniProtKB"/>
</dbReference>
<dbReference type="GO" id="GO:0070527">
    <property type="term" value="P:platelet aggregation"/>
    <property type="evidence" value="ECO:0000250"/>
    <property type="project" value="UniProtKB"/>
</dbReference>
<dbReference type="GO" id="GO:0043410">
    <property type="term" value="P:positive regulation of MAPK cascade"/>
    <property type="evidence" value="ECO:0000250"/>
    <property type="project" value="UniProtKB"/>
</dbReference>
<dbReference type="GO" id="GO:0051092">
    <property type="term" value="P:positive regulation of NF-kappaB transcription factor activity"/>
    <property type="evidence" value="ECO:0000250"/>
    <property type="project" value="UniProtKB"/>
</dbReference>
<dbReference type="GO" id="GO:0001934">
    <property type="term" value="P:positive regulation of protein phosphorylation"/>
    <property type="evidence" value="ECO:0000250"/>
    <property type="project" value="UniProtKB"/>
</dbReference>
<dbReference type="GO" id="GO:0006457">
    <property type="term" value="P:protein folding"/>
    <property type="evidence" value="ECO:0007669"/>
    <property type="project" value="InterPro"/>
</dbReference>
<dbReference type="GO" id="GO:0000413">
    <property type="term" value="P:protein peptidyl-prolyl isomerization"/>
    <property type="evidence" value="ECO:0000250"/>
    <property type="project" value="UniProtKB"/>
</dbReference>
<dbReference type="GO" id="GO:2001233">
    <property type="term" value="P:regulation of apoptotic signaling pathway"/>
    <property type="evidence" value="ECO:0000250"/>
    <property type="project" value="UniProtKB"/>
</dbReference>
<dbReference type="GO" id="GO:0045069">
    <property type="term" value="P:regulation of viral genome replication"/>
    <property type="evidence" value="ECO:0000250"/>
    <property type="project" value="UniProtKB"/>
</dbReference>
<dbReference type="CDD" id="cd01926">
    <property type="entry name" value="cyclophilin_ABH_like"/>
    <property type="match status" value="1"/>
</dbReference>
<dbReference type="FunFam" id="2.40.100.10:FF:000011">
    <property type="entry name" value="Peptidyl-prolyl cis-trans isomerase A"/>
    <property type="match status" value="1"/>
</dbReference>
<dbReference type="Gene3D" id="2.40.100.10">
    <property type="entry name" value="Cyclophilin-like"/>
    <property type="match status" value="1"/>
</dbReference>
<dbReference type="InterPro" id="IPR029000">
    <property type="entry name" value="Cyclophilin-like_dom_sf"/>
</dbReference>
<dbReference type="InterPro" id="IPR024936">
    <property type="entry name" value="Cyclophilin-type_PPIase"/>
</dbReference>
<dbReference type="InterPro" id="IPR020892">
    <property type="entry name" value="Cyclophilin-type_PPIase_CS"/>
</dbReference>
<dbReference type="InterPro" id="IPR002130">
    <property type="entry name" value="Cyclophilin-type_PPIase_dom"/>
</dbReference>
<dbReference type="PANTHER" id="PTHR11071">
    <property type="entry name" value="PEPTIDYL-PROLYL CIS-TRANS ISOMERASE"/>
    <property type="match status" value="1"/>
</dbReference>
<dbReference type="PANTHER" id="PTHR11071:SF490">
    <property type="entry name" value="PEPTIDYL-PROLYL CIS-TRANS ISOMERASE A"/>
    <property type="match status" value="1"/>
</dbReference>
<dbReference type="Pfam" id="PF00160">
    <property type="entry name" value="Pro_isomerase"/>
    <property type="match status" value="1"/>
</dbReference>
<dbReference type="PIRSF" id="PIRSF001467">
    <property type="entry name" value="Peptidylpro_ismrse"/>
    <property type="match status" value="1"/>
</dbReference>
<dbReference type="PRINTS" id="PR00153">
    <property type="entry name" value="CSAPPISMRASE"/>
</dbReference>
<dbReference type="SUPFAM" id="SSF50891">
    <property type="entry name" value="Cyclophilin-like"/>
    <property type="match status" value="1"/>
</dbReference>
<dbReference type="PROSITE" id="PS00170">
    <property type="entry name" value="CSA_PPIASE_1"/>
    <property type="match status" value="1"/>
</dbReference>
<dbReference type="PROSITE" id="PS50072">
    <property type="entry name" value="CSA_PPIASE_2"/>
    <property type="match status" value="1"/>
</dbReference>